<protein>
    <recommendedName>
        <fullName evidence="6">AMP deaminase 2</fullName>
        <ecNumber>3.5.4.6</ecNumber>
    </recommendedName>
    <alternativeName>
        <fullName>AMP deaminase isoform L</fullName>
    </alternativeName>
</protein>
<feature type="chain" id="PRO_0000194409" description="AMP deaminase 2">
    <location>
        <begin position="1"/>
        <end position="824"/>
    </location>
</feature>
<feature type="region of interest" description="Disordered" evidence="5">
    <location>
        <begin position="1"/>
        <end position="43"/>
    </location>
</feature>
<feature type="compositionally biased region" description="Basic residues" evidence="5">
    <location>
        <begin position="10"/>
        <end position="20"/>
    </location>
</feature>
<feature type="compositionally biased region" description="Low complexity" evidence="5">
    <location>
        <begin position="21"/>
        <end position="33"/>
    </location>
</feature>
<feature type="active site" description="Proton acceptor" evidence="4">
    <location>
        <position position="655"/>
    </location>
</feature>
<feature type="binding site" evidence="1">
    <location>
        <position position="364"/>
    </location>
    <ligand>
        <name>Zn(2+)</name>
        <dbReference type="ChEBI" id="CHEBI:29105"/>
        <note>catalytic</note>
    </ligand>
</feature>
<feature type="binding site" evidence="1">
    <location>
        <position position="366"/>
    </location>
    <ligand>
        <name>substrate</name>
    </ligand>
</feature>
<feature type="binding site" evidence="1">
    <location>
        <position position="366"/>
    </location>
    <ligand>
        <name>Zn(2+)</name>
        <dbReference type="ChEBI" id="CHEBI:29105"/>
        <note>catalytic</note>
    </ligand>
</feature>
<feature type="binding site" evidence="1">
    <location>
        <begin position="435"/>
        <end position="440"/>
    </location>
    <ligand>
        <name>substrate</name>
    </ligand>
</feature>
<feature type="binding site" evidence="1">
    <location>
        <position position="633"/>
    </location>
    <ligand>
        <name>Zn(2+)</name>
        <dbReference type="ChEBI" id="CHEBI:29105"/>
        <note>catalytic</note>
    </ligand>
</feature>
<feature type="binding site" evidence="1">
    <location>
        <position position="636"/>
    </location>
    <ligand>
        <name>substrate</name>
    </ligand>
</feature>
<feature type="binding site" evidence="1">
    <location>
        <position position="710"/>
    </location>
    <ligand>
        <name>Zn(2+)</name>
        <dbReference type="ChEBI" id="CHEBI:29105"/>
        <note>catalytic</note>
    </ligand>
</feature>
<feature type="binding site" evidence="1">
    <location>
        <begin position="711"/>
        <end position="714"/>
    </location>
    <ligand>
        <name>substrate</name>
    </ligand>
</feature>
<feature type="modified residue" description="Phosphoserine" evidence="2">
    <location>
        <position position="21"/>
    </location>
</feature>
<feature type="modified residue" description="Omega-N-methylarginine" evidence="3">
    <location>
        <position position="44"/>
    </location>
</feature>
<feature type="modified residue" description="Phosphoserine" evidence="2">
    <location>
        <position position="45"/>
    </location>
</feature>
<feature type="modified residue" description="Phosphoserine" evidence="2">
    <location>
        <position position="63"/>
    </location>
</feature>
<feature type="modified residue" description="Phosphoserine" evidence="2">
    <location>
        <position position="79"/>
    </location>
</feature>
<feature type="modified residue" description="Phosphotyrosine" evidence="3">
    <location>
        <position position="90"/>
    </location>
</feature>
<feature type="modified residue" description="Phosphoserine" evidence="2">
    <location>
        <position position="96"/>
    </location>
</feature>
<feature type="modified residue" description="Phosphoserine" evidence="8">
    <location>
        <position position="113"/>
    </location>
</feature>
<feature type="modified residue" description="Phosphothreonine" evidence="2">
    <location>
        <position position="133"/>
    </location>
</feature>
<feature type="modified residue" description="Phosphoserine" evidence="8">
    <location>
        <position position="135"/>
    </location>
</feature>
<feature type="modified residue" description="Phosphoserine" evidence="2">
    <location>
        <position position="137"/>
    </location>
</feature>
<proteinExistence type="evidence at protein level"/>
<organism>
    <name type="scientific">Rattus norvegicus</name>
    <name type="common">Rat</name>
    <dbReference type="NCBI Taxonomy" id="10116"/>
    <lineage>
        <taxon>Eukaryota</taxon>
        <taxon>Metazoa</taxon>
        <taxon>Chordata</taxon>
        <taxon>Craniata</taxon>
        <taxon>Vertebrata</taxon>
        <taxon>Euteleostomi</taxon>
        <taxon>Mammalia</taxon>
        <taxon>Eutheria</taxon>
        <taxon>Euarchontoglires</taxon>
        <taxon>Glires</taxon>
        <taxon>Rodentia</taxon>
        <taxon>Myomorpha</taxon>
        <taxon>Muroidea</taxon>
        <taxon>Muridae</taxon>
        <taxon>Murinae</taxon>
        <taxon>Rattus</taxon>
    </lineage>
</organism>
<accession>Q02356</accession>
<accession>B2GUT6</accession>
<comment type="function">
    <text evidence="1">AMP deaminase plays a critical role in energy metabolism. Catalyzes the deamination of AMP to IMP and plays an important role in the purine nucleotide cycle (By similarity).</text>
</comment>
<comment type="catalytic activity">
    <reaction>
        <text>AMP + H2O + H(+) = IMP + NH4(+)</text>
        <dbReference type="Rhea" id="RHEA:14777"/>
        <dbReference type="ChEBI" id="CHEBI:15377"/>
        <dbReference type="ChEBI" id="CHEBI:15378"/>
        <dbReference type="ChEBI" id="CHEBI:28938"/>
        <dbReference type="ChEBI" id="CHEBI:58053"/>
        <dbReference type="ChEBI" id="CHEBI:456215"/>
        <dbReference type="EC" id="3.5.4.6"/>
    </reaction>
</comment>
<comment type="cofactor">
    <cofactor evidence="1">
        <name>Zn(2+)</name>
        <dbReference type="ChEBI" id="CHEBI:29105"/>
    </cofactor>
    <text evidence="1">Binds 1 zinc ion per subunit.</text>
</comment>
<comment type="pathway">
    <text>Purine metabolism; IMP biosynthesis via salvage pathway; IMP from AMP: step 1/1.</text>
</comment>
<comment type="subunit">
    <text>Homotetramer.</text>
</comment>
<comment type="similarity">
    <text evidence="6">Belongs to the metallo-dependent hydrolases superfamily. Adenosine and AMP deaminases family.</text>
</comment>
<name>AMPD2_RAT</name>
<keyword id="KW-0378">Hydrolase</keyword>
<keyword id="KW-0479">Metal-binding</keyword>
<keyword id="KW-0488">Methylation</keyword>
<keyword id="KW-0546">Nucleotide metabolism</keyword>
<keyword id="KW-0597">Phosphoprotein</keyword>
<keyword id="KW-1185">Reference proteome</keyword>
<keyword id="KW-0862">Zinc</keyword>
<gene>
    <name evidence="7" type="primary">Ampd2</name>
</gene>
<dbReference type="EC" id="3.5.4.6"/>
<dbReference type="EMBL" id="BC166402">
    <property type="protein sequence ID" value="AAI66402.1"/>
    <property type="molecule type" value="mRNA"/>
</dbReference>
<dbReference type="EMBL" id="M38126">
    <property type="protein sequence ID" value="AAA40728.1"/>
    <property type="molecule type" value="Genomic_DNA"/>
</dbReference>
<dbReference type="PIR" id="A37056">
    <property type="entry name" value="A37056"/>
</dbReference>
<dbReference type="RefSeq" id="NP_001095151.1">
    <property type="nucleotide sequence ID" value="NM_001101681.2"/>
</dbReference>
<dbReference type="SMR" id="Q02356"/>
<dbReference type="FunCoup" id="Q02356">
    <property type="interactions" value="3071"/>
</dbReference>
<dbReference type="STRING" id="10116.ENSRNOP00000026051"/>
<dbReference type="BindingDB" id="Q02356"/>
<dbReference type="iPTMnet" id="Q02356"/>
<dbReference type="PhosphoSitePlus" id="Q02356"/>
<dbReference type="jPOST" id="Q02356"/>
<dbReference type="PaxDb" id="10116-ENSRNOP00000026051"/>
<dbReference type="Ensembl" id="ENSRNOT00000026051.6">
    <property type="protein sequence ID" value="ENSRNOP00000026051.5"/>
    <property type="gene ID" value="ENSRNOG00000019240.8"/>
</dbReference>
<dbReference type="GeneID" id="362015"/>
<dbReference type="KEGG" id="rno:362015"/>
<dbReference type="UCSC" id="RGD:2110">
    <property type="organism name" value="rat"/>
</dbReference>
<dbReference type="AGR" id="RGD:2110"/>
<dbReference type="CTD" id="271"/>
<dbReference type="RGD" id="2110">
    <property type="gene designation" value="Ampd2"/>
</dbReference>
<dbReference type="eggNOG" id="KOG1096">
    <property type="taxonomic scope" value="Eukaryota"/>
</dbReference>
<dbReference type="GeneTree" id="ENSGT00950000183011"/>
<dbReference type="InParanoid" id="Q02356"/>
<dbReference type="OMA" id="FHRKFPY"/>
<dbReference type="OrthoDB" id="1723809at2759"/>
<dbReference type="PhylomeDB" id="Q02356"/>
<dbReference type="TreeFam" id="TF300439"/>
<dbReference type="Reactome" id="R-RNO-74217">
    <property type="pathway name" value="Purine salvage"/>
</dbReference>
<dbReference type="UniPathway" id="UPA00591">
    <property type="reaction ID" value="UER00663"/>
</dbReference>
<dbReference type="PRO" id="PR:Q02356"/>
<dbReference type="Proteomes" id="UP000002494">
    <property type="component" value="Chromosome 2"/>
</dbReference>
<dbReference type="Bgee" id="ENSRNOG00000019240">
    <property type="expression patterns" value="Expressed in pancreas and 19 other cell types or tissues"/>
</dbReference>
<dbReference type="ExpressionAtlas" id="Q02356">
    <property type="expression patterns" value="baseline and differential"/>
</dbReference>
<dbReference type="GO" id="GO:0005829">
    <property type="term" value="C:cytosol"/>
    <property type="evidence" value="ECO:0000318"/>
    <property type="project" value="GO_Central"/>
</dbReference>
<dbReference type="GO" id="GO:0003876">
    <property type="term" value="F:AMP deaminase activity"/>
    <property type="evidence" value="ECO:0000266"/>
    <property type="project" value="RGD"/>
</dbReference>
<dbReference type="GO" id="GO:0046872">
    <property type="term" value="F:metal ion binding"/>
    <property type="evidence" value="ECO:0007669"/>
    <property type="project" value="UniProtKB-KW"/>
</dbReference>
<dbReference type="GO" id="GO:0046033">
    <property type="term" value="P:AMP metabolic process"/>
    <property type="evidence" value="ECO:0000266"/>
    <property type="project" value="RGD"/>
</dbReference>
<dbReference type="GO" id="GO:0046034">
    <property type="term" value="P:ATP metabolic process"/>
    <property type="evidence" value="ECO:0000266"/>
    <property type="project" value="RGD"/>
</dbReference>
<dbReference type="GO" id="GO:0042632">
    <property type="term" value="P:cholesterol homeostasis"/>
    <property type="evidence" value="ECO:0000266"/>
    <property type="project" value="RGD"/>
</dbReference>
<dbReference type="GO" id="GO:0052652">
    <property type="term" value="P:cyclic purine nucleotide metabolic process"/>
    <property type="evidence" value="ECO:0000250"/>
    <property type="project" value="UniProtKB"/>
</dbReference>
<dbReference type="GO" id="GO:0097009">
    <property type="term" value="P:energy homeostasis"/>
    <property type="evidence" value="ECO:0000266"/>
    <property type="project" value="RGD"/>
</dbReference>
<dbReference type="GO" id="GO:0046039">
    <property type="term" value="P:GTP metabolic process"/>
    <property type="evidence" value="ECO:0000266"/>
    <property type="project" value="RGD"/>
</dbReference>
<dbReference type="GO" id="GO:0006188">
    <property type="term" value="P:IMP biosynthetic process"/>
    <property type="evidence" value="ECO:0000266"/>
    <property type="project" value="RGD"/>
</dbReference>
<dbReference type="GO" id="GO:0032264">
    <property type="term" value="P:IMP salvage"/>
    <property type="evidence" value="ECO:0000266"/>
    <property type="project" value="RGD"/>
</dbReference>
<dbReference type="GO" id="GO:0009117">
    <property type="term" value="P:nucleotide metabolic process"/>
    <property type="evidence" value="ECO:0000266"/>
    <property type="project" value="RGD"/>
</dbReference>
<dbReference type="GO" id="GO:0072015">
    <property type="term" value="P:podocyte development"/>
    <property type="evidence" value="ECO:0000266"/>
    <property type="project" value="RGD"/>
</dbReference>
<dbReference type="CDD" id="cd01319">
    <property type="entry name" value="AMPD"/>
    <property type="match status" value="1"/>
</dbReference>
<dbReference type="FunFam" id="4.10.800.20:FF:000001">
    <property type="entry name" value="AMP deaminase"/>
    <property type="match status" value="1"/>
</dbReference>
<dbReference type="FunFam" id="3.20.20.140:FF:000035">
    <property type="entry name" value="Probable amp deaminase"/>
    <property type="match status" value="1"/>
</dbReference>
<dbReference type="Gene3D" id="4.10.800.20">
    <property type="match status" value="1"/>
</dbReference>
<dbReference type="Gene3D" id="3.20.20.140">
    <property type="entry name" value="Metal-dependent hydrolases"/>
    <property type="match status" value="1"/>
</dbReference>
<dbReference type="InterPro" id="IPR006650">
    <property type="entry name" value="A/AMP_deam_AS"/>
</dbReference>
<dbReference type="InterPro" id="IPR006329">
    <property type="entry name" value="AMPD"/>
</dbReference>
<dbReference type="InterPro" id="IPR032466">
    <property type="entry name" value="Metal_Hydrolase"/>
</dbReference>
<dbReference type="NCBIfam" id="TIGR01429">
    <property type="entry name" value="AMP_deaminase"/>
    <property type="match status" value="1"/>
</dbReference>
<dbReference type="PANTHER" id="PTHR11359">
    <property type="entry name" value="AMP DEAMINASE"/>
    <property type="match status" value="1"/>
</dbReference>
<dbReference type="PANTHER" id="PTHR11359:SF3">
    <property type="entry name" value="AMP DEAMINASE 2"/>
    <property type="match status" value="1"/>
</dbReference>
<dbReference type="Pfam" id="PF19326">
    <property type="entry name" value="AMP_deaminase"/>
    <property type="match status" value="1"/>
</dbReference>
<dbReference type="PIRSF" id="PIRSF001251">
    <property type="entry name" value="AMP_deaminase_met"/>
    <property type="match status" value="1"/>
</dbReference>
<dbReference type="SUPFAM" id="SSF51556">
    <property type="entry name" value="Metallo-dependent hydrolases"/>
    <property type="match status" value="1"/>
</dbReference>
<dbReference type="PROSITE" id="PS00485">
    <property type="entry name" value="A_DEAMINASE"/>
    <property type="match status" value="1"/>
</dbReference>
<evidence type="ECO:0000250" key="1"/>
<evidence type="ECO:0000250" key="2">
    <source>
        <dbReference type="UniProtKB" id="Q01433"/>
    </source>
</evidence>
<evidence type="ECO:0000250" key="3">
    <source>
        <dbReference type="UniProtKB" id="Q9DBT5"/>
    </source>
</evidence>
<evidence type="ECO:0000255" key="4">
    <source>
        <dbReference type="PROSITE-ProRule" id="PRU10104"/>
    </source>
</evidence>
<evidence type="ECO:0000256" key="5">
    <source>
        <dbReference type="SAM" id="MobiDB-lite"/>
    </source>
</evidence>
<evidence type="ECO:0000305" key="6"/>
<evidence type="ECO:0000312" key="7">
    <source>
        <dbReference type="RGD" id="2110"/>
    </source>
</evidence>
<evidence type="ECO:0007744" key="8">
    <source>
    </source>
</evidence>
<reference key="1">
    <citation type="journal article" date="2004" name="Genome Res.">
        <title>The status, quality, and expansion of the NIH full-length cDNA project: the Mammalian Gene Collection (MGC).</title>
        <authorList>
            <consortium name="The MGC Project Team"/>
        </authorList>
    </citation>
    <scope>NUCLEOTIDE SEQUENCE [LARGE SCALE MRNA]</scope>
    <source>
        <tissue>Lung</tissue>
    </source>
</reference>
<reference key="2">
    <citation type="journal article" date="1990" name="J. Biol. Chem.">
        <title>Adenylate deaminase. A multigene family in humans and rats.</title>
        <authorList>
            <person name="Morisaki T."/>
            <person name="Sabina R.L."/>
            <person name="Holmes E.W."/>
        </authorList>
    </citation>
    <scope>NUCLEOTIDE SEQUENCE [GENOMIC DNA] OF 632-719</scope>
    <source>
        <tissue>Brain</tissue>
    </source>
</reference>
<reference key="3">
    <citation type="journal article" date="2012" name="Nat. Commun.">
        <title>Quantitative maps of protein phosphorylation sites across 14 different rat organs and tissues.</title>
        <authorList>
            <person name="Lundby A."/>
            <person name="Secher A."/>
            <person name="Lage K."/>
            <person name="Nordsborg N.B."/>
            <person name="Dmytriyev A."/>
            <person name="Lundby C."/>
            <person name="Olsen J.V."/>
        </authorList>
    </citation>
    <scope>PHOSPHORYLATION [LARGE SCALE ANALYSIS] AT SER-113 AND SER-135</scope>
    <scope>IDENTIFICATION BY MASS SPECTROMETRY [LARGE SCALE ANALYSIS]</scope>
</reference>
<sequence length="824" mass="94787">MASYPGPGKSKAKYPFKKRASLQASAAAPEARSGLGASPLQSARSLPGTAPCLKHFPLDLRTSMDGKCKEIAEELFSRSLAESELRSAPYEFPEESPIEQLEERRQRLERQISQDVKLEPDILLRAKQDFLKTDSDSDLQLYKEQGEGQGDRGLWERDVVLEREFQRVIISGEEKCGVPFTDLLDAAKSVVRALFIREKYMALSLQSFCPTTRRYLQQLAEKPLETRTYEQSPDTPVSADAPVHPPALEQHPYEHCEPSTMPGDLGLGLRMVRGVVHVYTRRDPDEHCPEVELPYPDLQEFVADVNVLMALIINGPIKSFCYRRLQYLSSKFQMHVLLNEMKELAAQKKVPHRDFYNIRKVDTHIHASSCMNQKHLLRFIKRAMKRHLEEIVHVEQGREQTLREVFESMNLTAYDLSVDTLDVHADRNTFHRFDKFNAKYNPIGESVLREIFIKTDNKISGKYFAHIIKEVMSDLEESKYQNAELRLSIYGRSRDEWDKLARWAVNHRVHSPNVRWLVQVPRLFDVYRTKGQLANFQEMLENIFLPLFEATVHPASHPELHLFLEHVDGFDSVDDESKPENHVFNLESPLPEAWVEEDNPPYAYYLYYTFANMAMLNHLRRQRGFHTFVLRPHCGEAGPIHHLVSAFMLAENISHGLLLRKAPVLQYLYYLAQIGIAMSPLSNNSLFLSYHRNPLPEYLSRGLMVSLSTDDPLQFHFTKEPLMEEYSIATQVWKLSSCDMCELARNSVLMSGFSHKVKSHWLGPNYTKEGPEGNDIRRTNVPDIRVGYRYETLCQELALITQAVQSEMLETIPEEVGIVMSPGP</sequence>